<reference key="1">
    <citation type="journal article" date="2009" name="PLoS Genet.">
        <title>Organised genome dynamics in the Escherichia coli species results in highly diverse adaptive paths.</title>
        <authorList>
            <person name="Touchon M."/>
            <person name="Hoede C."/>
            <person name="Tenaillon O."/>
            <person name="Barbe V."/>
            <person name="Baeriswyl S."/>
            <person name="Bidet P."/>
            <person name="Bingen E."/>
            <person name="Bonacorsi S."/>
            <person name="Bouchier C."/>
            <person name="Bouvet O."/>
            <person name="Calteau A."/>
            <person name="Chiapello H."/>
            <person name="Clermont O."/>
            <person name="Cruveiller S."/>
            <person name="Danchin A."/>
            <person name="Diard M."/>
            <person name="Dossat C."/>
            <person name="Karoui M.E."/>
            <person name="Frapy E."/>
            <person name="Garry L."/>
            <person name="Ghigo J.M."/>
            <person name="Gilles A.M."/>
            <person name="Johnson J."/>
            <person name="Le Bouguenec C."/>
            <person name="Lescat M."/>
            <person name="Mangenot S."/>
            <person name="Martinez-Jehanne V."/>
            <person name="Matic I."/>
            <person name="Nassif X."/>
            <person name="Oztas S."/>
            <person name="Petit M.A."/>
            <person name="Pichon C."/>
            <person name="Rouy Z."/>
            <person name="Ruf C.S."/>
            <person name="Schneider D."/>
            <person name="Tourret J."/>
            <person name="Vacherie B."/>
            <person name="Vallenet D."/>
            <person name="Medigue C."/>
            <person name="Rocha E.P.C."/>
            <person name="Denamur E."/>
        </authorList>
    </citation>
    <scope>NUCLEOTIDE SEQUENCE [LARGE SCALE GENOMIC DNA]</scope>
    <source>
        <strain>ED1a</strain>
    </source>
</reference>
<name>NUSB_ECO81</name>
<proteinExistence type="inferred from homology"/>
<accession>B7MQD1</accession>
<sequence length="139" mass="15689">MKPAARRRARECAVQALYSWQLSQNDIADVEYQFLAEQDVKDVDVLYFRELLAGVATNTAYLDGLMKPYLSRLLEELGQVEKAVLRIALYELSKRSDVPYKVAINEAIELAKSFGAEDSHKFVNGVLDKAAPVIRPNKK</sequence>
<feature type="chain" id="PRO_1000192441" description="Transcription antitermination protein NusB">
    <location>
        <begin position="1"/>
        <end position="139"/>
    </location>
</feature>
<keyword id="KW-0694">RNA-binding</keyword>
<keyword id="KW-0804">Transcription</keyword>
<keyword id="KW-0889">Transcription antitermination</keyword>
<keyword id="KW-0805">Transcription regulation</keyword>
<dbReference type="EMBL" id="CU928162">
    <property type="protein sequence ID" value="CAR06649.1"/>
    <property type="molecule type" value="Genomic_DNA"/>
</dbReference>
<dbReference type="RefSeq" id="WP_000801125.1">
    <property type="nucleotide sequence ID" value="NC_011745.1"/>
</dbReference>
<dbReference type="SMR" id="B7MQD1"/>
<dbReference type="GeneID" id="93777044"/>
<dbReference type="KEGG" id="ecq:ECED1_0439"/>
<dbReference type="HOGENOM" id="CLU_087843_4_1_6"/>
<dbReference type="Proteomes" id="UP000000748">
    <property type="component" value="Chromosome"/>
</dbReference>
<dbReference type="GO" id="GO:0005829">
    <property type="term" value="C:cytosol"/>
    <property type="evidence" value="ECO:0007669"/>
    <property type="project" value="TreeGrafter"/>
</dbReference>
<dbReference type="GO" id="GO:0003723">
    <property type="term" value="F:RNA binding"/>
    <property type="evidence" value="ECO:0007669"/>
    <property type="project" value="UniProtKB-UniRule"/>
</dbReference>
<dbReference type="GO" id="GO:0006353">
    <property type="term" value="P:DNA-templated transcription termination"/>
    <property type="evidence" value="ECO:0007669"/>
    <property type="project" value="UniProtKB-UniRule"/>
</dbReference>
<dbReference type="GO" id="GO:0031564">
    <property type="term" value="P:transcription antitermination"/>
    <property type="evidence" value="ECO:0007669"/>
    <property type="project" value="UniProtKB-KW"/>
</dbReference>
<dbReference type="CDD" id="cd00619">
    <property type="entry name" value="Terminator_NusB"/>
    <property type="match status" value="1"/>
</dbReference>
<dbReference type="FunFam" id="1.10.940.10:FF:000001">
    <property type="entry name" value="Transcription antitermination factor NusB"/>
    <property type="match status" value="1"/>
</dbReference>
<dbReference type="Gene3D" id="1.10.940.10">
    <property type="entry name" value="NusB-like"/>
    <property type="match status" value="1"/>
</dbReference>
<dbReference type="HAMAP" id="MF_00073">
    <property type="entry name" value="NusB"/>
    <property type="match status" value="1"/>
</dbReference>
<dbReference type="InterPro" id="IPR035926">
    <property type="entry name" value="NusB-like_sf"/>
</dbReference>
<dbReference type="InterPro" id="IPR011605">
    <property type="entry name" value="NusB_fam"/>
</dbReference>
<dbReference type="InterPro" id="IPR006027">
    <property type="entry name" value="NusB_RsmB_TIM44"/>
</dbReference>
<dbReference type="NCBIfam" id="TIGR01951">
    <property type="entry name" value="nusB"/>
    <property type="match status" value="1"/>
</dbReference>
<dbReference type="PANTHER" id="PTHR11078:SF3">
    <property type="entry name" value="ANTITERMINATION NUSB DOMAIN-CONTAINING PROTEIN"/>
    <property type="match status" value="1"/>
</dbReference>
<dbReference type="PANTHER" id="PTHR11078">
    <property type="entry name" value="N UTILIZATION SUBSTANCE PROTEIN B-RELATED"/>
    <property type="match status" value="1"/>
</dbReference>
<dbReference type="Pfam" id="PF01029">
    <property type="entry name" value="NusB"/>
    <property type="match status" value="1"/>
</dbReference>
<dbReference type="SUPFAM" id="SSF48013">
    <property type="entry name" value="NusB-like"/>
    <property type="match status" value="1"/>
</dbReference>
<gene>
    <name evidence="1" type="primary">nusB</name>
    <name type="ordered locus">ECED1_0439</name>
</gene>
<comment type="function">
    <text evidence="1">Involved in transcription antitermination. Required for transcription of ribosomal RNA (rRNA) genes. Binds specifically to the boxA antiterminator sequence of the ribosomal RNA (rrn) operons.</text>
</comment>
<comment type="similarity">
    <text evidence="1">Belongs to the NusB family.</text>
</comment>
<evidence type="ECO:0000255" key="1">
    <source>
        <dbReference type="HAMAP-Rule" id="MF_00073"/>
    </source>
</evidence>
<organism>
    <name type="scientific">Escherichia coli O81 (strain ED1a)</name>
    <dbReference type="NCBI Taxonomy" id="585397"/>
    <lineage>
        <taxon>Bacteria</taxon>
        <taxon>Pseudomonadati</taxon>
        <taxon>Pseudomonadota</taxon>
        <taxon>Gammaproteobacteria</taxon>
        <taxon>Enterobacterales</taxon>
        <taxon>Enterobacteriaceae</taxon>
        <taxon>Escherichia</taxon>
    </lineage>
</organism>
<protein>
    <recommendedName>
        <fullName evidence="1">Transcription antitermination protein NusB</fullName>
    </recommendedName>
    <alternativeName>
        <fullName evidence="1">Antitermination factor NusB</fullName>
    </alternativeName>
</protein>